<reference key="1">
    <citation type="journal article" date="1997" name="FEBS Lett.">
        <title>A novel antimicrobial peptide from the loach, Misgurnus anguillicaudatus.</title>
        <authorList>
            <person name="Park C.B."/>
            <person name="Lee H.J."/>
            <person name="Park I.Y."/>
            <person name="Kim M.S."/>
            <person name="Kim S.C."/>
        </authorList>
    </citation>
    <scope>PROTEIN SEQUENCE</scope>
    <scope>MASS SPECTROMETRY</scope>
</reference>
<organism>
    <name type="scientific">Misgurnus anguillicaudatus</name>
    <name type="common">Oriental weatherloach</name>
    <name type="synonym">Cobitis anguillicaudata</name>
    <dbReference type="NCBI Taxonomy" id="75329"/>
    <lineage>
        <taxon>Eukaryota</taxon>
        <taxon>Metazoa</taxon>
        <taxon>Chordata</taxon>
        <taxon>Craniata</taxon>
        <taxon>Vertebrata</taxon>
        <taxon>Euteleostomi</taxon>
        <taxon>Actinopterygii</taxon>
        <taxon>Neopterygii</taxon>
        <taxon>Teleostei</taxon>
        <taxon>Ostariophysi</taxon>
        <taxon>Cypriniformes</taxon>
        <taxon>Cobitidae</taxon>
        <taxon>Cobitinae</taxon>
        <taxon>Misgurnus</taxon>
    </lineage>
</organism>
<comment type="function">
    <text>Strong antimicrobial activity against several Gram-positive and Gram-negative bacteria and fungi.</text>
</comment>
<comment type="subcellular location">
    <subcellularLocation>
        <location>Secreted</location>
    </subcellularLocation>
</comment>
<comment type="mass spectrometry"/>
<name>MISG_MISAN</name>
<protein>
    <recommendedName>
        <fullName>Misgurin</fullName>
    </recommendedName>
</protein>
<evidence type="ECO:0000256" key="1">
    <source>
        <dbReference type="SAM" id="MobiDB-lite"/>
    </source>
</evidence>
<evidence type="ECO:0000269" key="2">
    <source>
    </source>
</evidence>
<dbReference type="GO" id="GO:0005576">
    <property type="term" value="C:extracellular region"/>
    <property type="evidence" value="ECO:0007669"/>
    <property type="project" value="UniProtKB-SubCell"/>
</dbReference>
<dbReference type="GO" id="GO:0042742">
    <property type="term" value="P:defense response to bacterium"/>
    <property type="evidence" value="ECO:0007669"/>
    <property type="project" value="UniProtKB-KW"/>
</dbReference>
<dbReference type="GO" id="GO:0050832">
    <property type="term" value="P:defense response to fungus"/>
    <property type="evidence" value="ECO:0007669"/>
    <property type="project" value="UniProtKB-KW"/>
</dbReference>
<dbReference type="GO" id="GO:0031640">
    <property type="term" value="P:killing of cells of another organism"/>
    <property type="evidence" value="ECO:0007669"/>
    <property type="project" value="UniProtKB-KW"/>
</dbReference>
<proteinExistence type="evidence at protein level"/>
<sequence>RQRVEELSKFSKKGAAARRRK</sequence>
<feature type="peptide" id="PRO_0000044159" description="Misgurin">
    <location>
        <begin position="1"/>
        <end position="21"/>
    </location>
</feature>
<feature type="region of interest" description="Disordered" evidence="1">
    <location>
        <begin position="1"/>
        <end position="21"/>
    </location>
</feature>
<feature type="compositionally biased region" description="Basic residues" evidence="1">
    <location>
        <begin position="10"/>
        <end position="21"/>
    </location>
</feature>
<keyword id="KW-0044">Antibiotic</keyword>
<keyword id="KW-0929">Antimicrobial</keyword>
<keyword id="KW-0903">Direct protein sequencing</keyword>
<keyword id="KW-0295">Fungicide</keyword>
<keyword id="KW-0964">Secreted</keyword>
<accession>P81474</accession>